<organism>
    <name type="scientific">Rattus norvegicus</name>
    <name type="common">Rat</name>
    <dbReference type="NCBI Taxonomy" id="10116"/>
    <lineage>
        <taxon>Eukaryota</taxon>
        <taxon>Metazoa</taxon>
        <taxon>Chordata</taxon>
        <taxon>Craniata</taxon>
        <taxon>Vertebrata</taxon>
        <taxon>Euteleostomi</taxon>
        <taxon>Mammalia</taxon>
        <taxon>Eutheria</taxon>
        <taxon>Euarchontoglires</taxon>
        <taxon>Glires</taxon>
        <taxon>Rodentia</taxon>
        <taxon>Myomorpha</taxon>
        <taxon>Muroidea</taxon>
        <taxon>Muridae</taxon>
        <taxon>Murinae</taxon>
        <taxon>Rattus</taxon>
    </lineage>
</organism>
<dbReference type="EMBL" id="AF193755">
    <property type="protein sequence ID" value="AAG28411.1"/>
    <property type="molecule type" value="mRNA"/>
</dbReference>
<dbReference type="RefSeq" id="NP_071638.1">
    <property type="nucleotide sequence ID" value="NM_022302.2"/>
</dbReference>
<dbReference type="SMR" id="Q9ESB5"/>
<dbReference type="FunCoup" id="Q9ESB5">
    <property type="interactions" value="892"/>
</dbReference>
<dbReference type="STRING" id="10116.ENSRNOP00000009718"/>
<dbReference type="iPTMnet" id="Q9ESB5"/>
<dbReference type="PhosphoSitePlus" id="Q9ESB5"/>
<dbReference type="PaxDb" id="10116-ENSRNOP00000009718"/>
<dbReference type="GeneID" id="64169"/>
<dbReference type="KEGG" id="rno:64169"/>
<dbReference type="UCSC" id="RGD:708548">
    <property type="organism name" value="rat"/>
</dbReference>
<dbReference type="AGR" id="RGD:708548"/>
<dbReference type="CTD" id="64168"/>
<dbReference type="RGD" id="708548">
    <property type="gene designation" value="Necab1"/>
</dbReference>
<dbReference type="VEuPathDB" id="HostDB:ENSRNOG00000007256"/>
<dbReference type="eggNOG" id="ENOG502QWRY">
    <property type="taxonomic scope" value="Eukaryota"/>
</dbReference>
<dbReference type="HOGENOM" id="CLU_041553_0_0_1"/>
<dbReference type="InParanoid" id="Q9ESB5"/>
<dbReference type="OrthoDB" id="70594at9989"/>
<dbReference type="PhylomeDB" id="Q9ESB5"/>
<dbReference type="PRO" id="PR:Q9ESB5"/>
<dbReference type="Proteomes" id="UP000002494">
    <property type="component" value="Chromosome 5"/>
</dbReference>
<dbReference type="Bgee" id="ENSRNOG00000007256">
    <property type="expression patterns" value="Expressed in frontal cortex and 11 other cell types or tissues"/>
</dbReference>
<dbReference type="GO" id="GO:0005737">
    <property type="term" value="C:cytoplasm"/>
    <property type="evidence" value="ECO:0000318"/>
    <property type="project" value="GO_Central"/>
</dbReference>
<dbReference type="GO" id="GO:0005509">
    <property type="term" value="F:calcium ion binding"/>
    <property type="evidence" value="ECO:0007669"/>
    <property type="project" value="InterPro"/>
</dbReference>
<dbReference type="GO" id="GO:0042802">
    <property type="term" value="F:identical protein binding"/>
    <property type="evidence" value="ECO:0000266"/>
    <property type="project" value="RGD"/>
</dbReference>
<dbReference type="GO" id="GO:0001835">
    <property type="term" value="P:blastocyst hatching"/>
    <property type="evidence" value="ECO:0000266"/>
    <property type="project" value="RGD"/>
</dbReference>
<dbReference type="GO" id="GO:0042984">
    <property type="term" value="P:regulation of amyloid precursor protein biosynthetic process"/>
    <property type="evidence" value="ECO:0000318"/>
    <property type="project" value="GO_Central"/>
</dbReference>
<dbReference type="FunFam" id="3.30.70.100:FF:000025">
    <property type="entry name" value="N-terminal EF-hand calcium-binding protein 1"/>
    <property type="match status" value="1"/>
</dbReference>
<dbReference type="FunFam" id="1.10.238.10:FF:000642">
    <property type="entry name" value="Uncharacterized protein"/>
    <property type="match status" value="1"/>
</dbReference>
<dbReference type="Gene3D" id="3.30.70.100">
    <property type="match status" value="1"/>
</dbReference>
<dbReference type="Gene3D" id="1.10.238.10">
    <property type="entry name" value="EF-hand"/>
    <property type="match status" value="1"/>
</dbReference>
<dbReference type="InterPro" id="IPR007138">
    <property type="entry name" value="ABM_dom"/>
</dbReference>
<dbReference type="InterPro" id="IPR011008">
    <property type="entry name" value="Dimeric_a/b-barrel"/>
</dbReference>
<dbReference type="InterPro" id="IPR011992">
    <property type="entry name" value="EF-hand-dom_pair"/>
</dbReference>
<dbReference type="InterPro" id="IPR018247">
    <property type="entry name" value="EF_Hand_1_Ca_BS"/>
</dbReference>
<dbReference type="InterPro" id="IPR002048">
    <property type="entry name" value="EF_hand_dom"/>
</dbReference>
<dbReference type="InterPro" id="IPR039862">
    <property type="entry name" value="NECAB1/2/3"/>
</dbReference>
<dbReference type="PANTHER" id="PTHR12178">
    <property type="entry name" value="EF-HAND DOMAIN-CONTAINING PROTEIN"/>
    <property type="match status" value="1"/>
</dbReference>
<dbReference type="PANTHER" id="PTHR12178:SF11">
    <property type="entry name" value="N-TERMINAL EF-HAND CALCIUM-BINDING PROTEIN 1"/>
    <property type="match status" value="1"/>
</dbReference>
<dbReference type="Pfam" id="PF03992">
    <property type="entry name" value="ABM"/>
    <property type="match status" value="1"/>
</dbReference>
<dbReference type="SMART" id="SM00054">
    <property type="entry name" value="EFh"/>
    <property type="match status" value="2"/>
</dbReference>
<dbReference type="SUPFAM" id="SSF54909">
    <property type="entry name" value="Dimeric alpha+beta barrel"/>
    <property type="match status" value="1"/>
</dbReference>
<dbReference type="SUPFAM" id="SSF47473">
    <property type="entry name" value="EF-hand"/>
    <property type="match status" value="1"/>
</dbReference>
<dbReference type="PROSITE" id="PS51725">
    <property type="entry name" value="ABM"/>
    <property type="match status" value="1"/>
</dbReference>
<dbReference type="PROSITE" id="PS00018">
    <property type="entry name" value="EF_HAND_1"/>
    <property type="match status" value="1"/>
</dbReference>
<dbReference type="PROSITE" id="PS50222">
    <property type="entry name" value="EF_HAND_2"/>
    <property type="match status" value="2"/>
</dbReference>
<reference key="1">
    <citation type="journal article" date="2002" name="Neuroscience">
        <title>NECABs: a family of neuronal Ca(2+)-binding proteins with an unusual domain structure and a restricted expression pattern.</title>
        <authorList>
            <person name="Sugita S."/>
            <person name="Ho A."/>
            <person name="Suedhof T.C."/>
        </authorList>
    </citation>
    <scope>NUCLEOTIDE SEQUENCE [MRNA]</scope>
    <scope>PROTEIN SEQUENCE OF 315-321</scope>
    <scope>INTERACTION WITH STX1 AND CPNE6</scope>
    <source>
        <tissue>Brain</tissue>
    </source>
</reference>
<reference key="2">
    <citation type="journal article" date="2012" name="Nat. Commun.">
        <title>Quantitative maps of protein phosphorylation sites across 14 different rat organs and tissues.</title>
        <authorList>
            <person name="Lundby A."/>
            <person name="Secher A."/>
            <person name="Lage K."/>
            <person name="Nordsborg N.B."/>
            <person name="Dmytriyev A."/>
            <person name="Lundby C."/>
            <person name="Olsen J.V."/>
        </authorList>
    </citation>
    <scope>PHOSPHORYLATION [LARGE SCALE ANALYSIS] AT SER-4</scope>
    <scope>IDENTIFICATION BY MASS SPECTROMETRY [LARGE SCALE ANALYSIS]</scope>
</reference>
<protein>
    <recommendedName>
        <fullName>N-terminal EF-hand calcium-binding protein 1</fullName>
        <shortName>EF-hand calcium-binding protein 1</shortName>
    </recommendedName>
    <alternativeName>
        <fullName>Neuronal calcium-binding protein 1</fullName>
    </alternativeName>
    <alternativeName>
        <fullName>Synaptotagmin-interacting protein 1</fullName>
        <shortName>Stip-1</shortName>
    </alternativeName>
</protein>
<proteinExistence type="evidence at protein level"/>
<keyword id="KW-0106">Calcium</keyword>
<keyword id="KW-0175">Coiled coil</keyword>
<keyword id="KW-0963">Cytoplasm</keyword>
<keyword id="KW-0903">Direct protein sequencing</keyword>
<keyword id="KW-0479">Metal-binding</keyword>
<keyword id="KW-0597">Phosphoprotein</keyword>
<keyword id="KW-1185">Reference proteome</keyword>
<keyword id="KW-0677">Repeat</keyword>
<evidence type="ECO:0000250" key="1"/>
<evidence type="ECO:0000250" key="2">
    <source>
        <dbReference type="UniProtKB" id="Q8BG18"/>
    </source>
</evidence>
<evidence type="ECO:0000250" key="3">
    <source>
        <dbReference type="UniProtKB" id="Q8N987"/>
    </source>
</evidence>
<evidence type="ECO:0000255" key="4"/>
<evidence type="ECO:0000255" key="5">
    <source>
        <dbReference type="PROSITE-ProRule" id="PRU00448"/>
    </source>
</evidence>
<evidence type="ECO:0000256" key="6">
    <source>
        <dbReference type="SAM" id="MobiDB-lite"/>
    </source>
</evidence>
<evidence type="ECO:0007744" key="7">
    <source>
    </source>
</evidence>
<accession>Q9ESB5</accession>
<gene>
    <name type="primary">Necab1</name>
    <name type="synonym">Efcbp1</name>
    <name type="synonym">Stip</name>
</gene>
<feature type="chain" id="PRO_0000282612" description="N-terminal EF-hand calcium-binding protein 1">
    <location>
        <begin position="1"/>
        <end position="352"/>
    </location>
</feature>
<feature type="domain" description="EF-hand 1" evidence="5">
    <location>
        <begin position="26"/>
        <end position="61"/>
    </location>
</feature>
<feature type="domain" description="EF-hand 2" evidence="5">
    <location>
        <begin position="60"/>
        <end position="95"/>
    </location>
</feature>
<feature type="domain" description="ABM">
    <location>
        <begin position="252"/>
        <end position="340"/>
    </location>
</feature>
<feature type="region of interest" description="Disordered" evidence="6">
    <location>
        <begin position="155"/>
        <end position="202"/>
    </location>
</feature>
<feature type="coiled-coil region" evidence="4">
    <location>
        <begin position="135"/>
        <end position="163"/>
    </location>
</feature>
<feature type="coiled-coil region" evidence="4">
    <location>
        <begin position="209"/>
        <end position="275"/>
    </location>
</feature>
<feature type="compositionally biased region" description="Polar residues" evidence="6">
    <location>
        <begin position="190"/>
        <end position="202"/>
    </location>
</feature>
<feature type="binding site" evidence="5">
    <location>
        <position position="39"/>
    </location>
    <ligand>
        <name>Ca(2+)</name>
        <dbReference type="ChEBI" id="CHEBI:29108"/>
    </ligand>
</feature>
<feature type="binding site" evidence="5">
    <location>
        <position position="41"/>
    </location>
    <ligand>
        <name>Ca(2+)</name>
        <dbReference type="ChEBI" id="CHEBI:29108"/>
    </ligand>
</feature>
<feature type="binding site" evidence="5">
    <location>
        <position position="43"/>
    </location>
    <ligand>
        <name>Ca(2+)</name>
        <dbReference type="ChEBI" id="CHEBI:29108"/>
    </ligand>
</feature>
<feature type="binding site" evidence="5">
    <location>
        <position position="45"/>
    </location>
    <ligand>
        <name>Ca(2+)</name>
        <dbReference type="ChEBI" id="CHEBI:29108"/>
    </ligand>
</feature>
<feature type="binding site" evidence="5">
    <location>
        <position position="50"/>
    </location>
    <ligand>
        <name>Ca(2+)</name>
        <dbReference type="ChEBI" id="CHEBI:29108"/>
    </ligand>
</feature>
<feature type="modified residue" description="Phosphoserine" evidence="7">
    <location>
        <position position="4"/>
    </location>
</feature>
<feature type="modified residue" description="Phosphoserine" evidence="2">
    <location>
        <position position="192"/>
    </location>
</feature>
<feature type="modified residue" description="Phosphoserine" evidence="2">
    <location>
        <position position="197"/>
    </location>
</feature>
<sequence>MEDSRETSPSSNNSSEELSSALQLSKGMSIFLDILRRADKNDDGKLSFEEFKAYFADGVLSGEELHELFHTIDTHNTNNLDTEELCEYFSQHLGEYENVLAALEDLNLSILKAMGKTKKDYQEASNLEQFVTRFLLKETLNQLQSLQNSLECAMETTEEQTRQERQGPSKPEVLSIQWPGKRSSRRVQRHNSFSPNSPQFNVSSPALLEEDNQWMTQINRLQKLIDRLEKKDLKLEPLEEEVIEENTKPHIMLVQRQMSVTEEDLEEFQLALKHYVESASAQSGCLRISIQKLSNESRYMIYEFWENSSVWNRHLQTNYSKTFQRSNVDFLETPELTSTMLVPASWWILKNN</sequence>
<name>NECA1_RAT</name>
<comment type="subunit">
    <text evidence="3">Interacts with STX1. May interact with CPNE6.</text>
</comment>
<comment type="subcellular location">
    <subcellularLocation>
        <location evidence="1">Cytoplasm</location>
    </subcellularLocation>
</comment>